<sequence>MQLNTRQARIFKLANLLGTGKPVSAADIITSLECSEPTLTRALKELRESYSAEIKYSKAGHSYHLVNPGQLDKKTLRRMNEALAQNAELKTGESTGKVVLDKDKKTAVSLSLRMRILRKIDRLAALSGSTRSEAVEKLALHSVDELIKEYSAKKS</sequence>
<reference key="1">
    <citation type="journal article" date="1997" name="J. Bacteriol.">
        <title>Characterization of a region of the IncHI2 plasmid R478 which protects Escherichia coli from toxic effects specified by components of the tellurite, phage, and colicin resistance cluster.</title>
        <authorList>
            <person name="Whelan K.F."/>
            <person name="Sherburne R.K."/>
            <person name="Taylor D.E."/>
        </authorList>
    </citation>
    <scope>NUCLEOTIDE SEQUENCE [GENOMIC DNA]</scope>
    <scope>FUNCTION</scope>
    <scope>EXPRESSION IN E.COLI</scope>
</reference>
<geneLocation type="plasmid" evidence="3">
    <name>IncHI2 R478</name>
</geneLocation>
<name>TERW_SERMA</name>
<comment type="function">
    <text evidence="1 2">Involved in tellurite resistance (PubMed:8981981). TerW binds specifically to the potential promoter region of the terZABCDE operon and probably regulates expression of the genes (By similarity).</text>
</comment>
<comment type="miscellaneous">
    <text evidence="2">When expressed in E.coli, protects the cells from toxic effects specified by components of the tellurite, phage and colicin resistance cluster.</text>
</comment>
<feature type="chain" id="PRO_0000393370" description="Probable tellurium resistance transcriptional regulator TerW">
    <location>
        <begin position="1"/>
        <end position="155"/>
    </location>
</feature>
<organism>
    <name type="scientific">Serratia marcescens</name>
    <dbReference type="NCBI Taxonomy" id="615"/>
    <lineage>
        <taxon>Bacteria</taxon>
        <taxon>Pseudomonadati</taxon>
        <taxon>Pseudomonadota</taxon>
        <taxon>Gammaproteobacteria</taxon>
        <taxon>Enterobacterales</taxon>
        <taxon>Yersiniaceae</taxon>
        <taxon>Serratia</taxon>
    </lineage>
</organism>
<gene>
    <name evidence="3" type="primary">terW</name>
</gene>
<evidence type="ECO:0000250" key="1">
    <source>
        <dbReference type="UniProtKB" id="P0DX03"/>
    </source>
</evidence>
<evidence type="ECO:0000269" key="2">
    <source>
    </source>
</evidence>
<evidence type="ECO:0000303" key="3">
    <source>
    </source>
</evidence>
<protein>
    <recommendedName>
        <fullName evidence="1">Probable tellurium resistance transcriptional regulator TerW</fullName>
    </recommendedName>
</protein>
<keyword id="KW-0238">DNA-binding</keyword>
<keyword id="KW-0614">Plasmid</keyword>
<keyword id="KW-0778">Tellurium resistance</keyword>
<keyword id="KW-0804">Transcription</keyword>
<keyword id="KW-0805">Transcription regulation</keyword>
<dbReference type="EMBL" id="U49054">
    <property type="protein sequence ID" value="AAC44736.1"/>
    <property type="molecule type" value="Genomic_DNA"/>
</dbReference>
<dbReference type="RefSeq" id="NP_941142.1">
    <property type="nucleotide sequence ID" value="NC_005211.1"/>
</dbReference>
<dbReference type="RefSeq" id="WP_001176767.1">
    <property type="nucleotide sequence ID" value="NZ_NPIX01000034.1"/>
</dbReference>
<dbReference type="SMR" id="P75010"/>
<dbReference type="GeneID" id="93247996"/>
<dbReference type="GO" id="GO:0003677">
    <property type="term" value="F:DNA binding"/>
    <property type="evidence" value="ECO:0007669"/>
    <property type="project" value="UniProtKB-KW"/>
</dbReference>
<dbReference type="GO" id="GO:0046690">
    <property type="term" value="P:response to tellurium ion"/>
    <property type="evidence" value="ECO:0007669"/>
    <property type="project" value="UniProtKB-KW"/>
</dbReference>
<dbReference type="Gene3D" id="1.10.10.10">
    <property type="entry name" value="Winged helix-like DNA-binding domain superfamily/Winged helix DNA-binding domain"/>
    <property type="match status" value="1"/>
</dbReference>
<dbReference type="InterPro" id="IPR011233">
    <property type="entry name" value="TerW"/>
</dbReference>
<dbReference type="InterPro" id="IPR036388">
    <property type="entry name" value="WH-like_DNA-bd_sf"/>
</dbReference>
<dbReference type="PIRSF" id="PIRSF030837">
    <property type="entry name" value="TerW"/>
    <property type="match status" value="1"/>
</dbReference>
<accession>P75010</accession>
<proteinExistence type="inferred from homology"/>